<evidence type="ECO:0000250" key="1"/>
<evidence type="ECO:0000255" key="2"/>
<evidence type="ECO:0000256" key="3">
    <source>
        <dbReference type="SAM" id="MobiDB-lite"/>
    </source>
</evidence>
<evidence type="ECO:0000305" key="4"/>
<gene>
    <name type="primary">RRP36</name>
    <name type="ordered locus">CNBG1850</name>
</gene>
<sequence length="296" mass="33125">MFADLNSLPLSTLAKAQKSLSRKSSSSSSNGRSKEEKLALMKSKLAQMQRSKGKAVAVPDTDSHRFGSRAQESDEESDSGPETTSSTKRGSKHAPAALSTKKQVSRKRQVIEVPKPERRDPRFSSVSAGHANADLHSKSYSFLPDLLRQEFSGLKEAVAAAKKAEKNCPWAEKPMRTAERERLEVQMGQVRTKLVRTEKEAMEREVLAKAKKEEREKRTQGKAAWFMKKGESPKCEKKDLLLKARFETLEKQGGKTAVKKLVEKKRKKLASKEKKSRPFAKGAEGMGRDTKRRRVA</sequence>
<dbReference type="EMBL" id="AAEY01000038">
    <property type="protein sequence ID" value="EAL19556.1"/>
    <property type="status" value="ALT_SEQ"/>
    <property type="molecule type" value="Genomic_DNA"/>
</dbReference>
<dbReference type="RefSeq" id="XP_774203.1">
    <property type="nucleotide sequence ID" value="XM_769110.1"/>
</dbReference>
<dbReference type="GeneID" id="4937219"/>
<dbReference type="KEGG" id="cnb:CNBG1850"/>
<dbReference type="HOGENOM" id="CLU_048802_1_1_1"/>
<dbReference type="OrthoDB" id="9761at5206"/>
<dbReference type="GO" id="GO:0030686">
    <property type="term" value="C:90S preribosome"/>
    <property type="evidence" value="ECO:0007669"/>
    <property type="project" value="TreeGrafter"/>
</dbReference>
<dbReference type="GO" id="GO:0005730">
    <property type="term" value="C:nucleolus"/>
    <property type="evidence" value="ECO:0007669"/>
    <property type="project" value="UniProtKB-SubCell"/>
</dbReference>
<dbReference type="GO" id="GO:0000462">
    <property type="term" value="P:maturation of SSU-rRNA from tricistronic rRNA transcript (SSU-rRNA, 5.8S rRNA, LSU-rRNA)"/>
    <property type="evidence" value="ECO:0007669"/>
    <property type="project" value="TreeGrafter"/>
</dbReference>
<dbReference type="InterPro" id="IPR009292">
    <property type="entry name" value="RRP36"/>
</dbReference>
<dbReference type="PANTHER" id="PTHR21738">
    <property type="entry name" value="RIBOSOMAL RNA PROCESSING PROTEIN 36 HOMOLOG"/>
    <property type="match status" value="1"/>
</dbReference>
<dbReference type="PANTHER" id="PTHR21738:SF0">
    <property type="entry name" value="RIBOSOMAL RNA PROCESSING PROTEIN 36 HOMOLOG"/>
    <property type="match status" value="1"/>
</dbReference>
<dbReference type="Pfam" id="PF06102">
    <property type="entry name" value="RRP36"/>
    <property type="match status" value="1"/>
</dbReference>
<protein>
    <recommendedName>
        <fullName>rRNA biogenesis protein RRP36</fullName>
    </recommendedName>
    <alternativeName>
        <fullName>Ribosomal RNA-processing protein 36</fullName>
    </alternativeName>
</protein>
<reference key="1">
    <citation type="journal article" date="2005" name="Science">
        <title>The genome of the basidiomycetous yeast and human pathogen Cryptococcus neoformans.</title>
        <authorList>
            <person name="Loftus B.J."/>
            <person name="Fung E."/>
            <person name="Roncaglia P."/>
            <person name="Rowley D."/>
            <person name="Amedeo P."/>
            <person name="Bruno D."/>
            <person name="Vamathevan J."/>
            <person name="Miranda M."/>
            <person name="Anderson I.J."/>
            <person name="Fraser J.A."/>
            <person name="Allen J.E."/>
            <person name="Bosdet I.E."/>
            <person name="Brent M.R."/>
            <person name="Chiu R."/>
            <person name="Doering T.L."/>
            <person name="Donlin M.J."/>
            <person name="D'Souza C.A."/>
            <person name="Fox D.S."/>
            <person name="Grinberg V."/>
            <person name="Fu J."/>
            <person name="Fukushima M."/>
            <person name="Haas B.J."/>
            <person name="Huang J.C."/>
            <person name="Janbon G."/>
            <person name="Jones S.J.M."/>
            <person name="Koo H.L."/>
            <person name="Krzywinski M.I."/>
            <person name="Kwon-Chung K.J."/>
            <person name="Lengeler K.B."/>
            <person name="Maiti R."/>
            <person name="Marra M.A."/>
            <person name="Marra R.E."/>
            <person name="Mathewson C.A."/>
            <person name="Mitchell T.G."/>
            <person name="Pertea M."/>
            <person name="Riggs F.R."/>
            <person name="Salzberg S.L."/>
            <person name="Schein J.E."/>
            <person name="Shvartsbeyn A."/>
            <person name="Shin H."/>
            <person name="Shumway M."/>
            <person name="Specht C.A."/>
            <person name="Suh B.B."/>
            <person name="Tenney A."/>
            <person name="Utterback T.R."/>
            <person name="Wickes B.L."/>
            <person name="Wortman J.R."/>
            <person name="Wye N.H."/>
            <person name="Kronstad J.W."/>
            <person name="Lodge J.K."/>
            <person name="Heitman J."/>
            <person name="Davis R.W."/>
            <person name="Fraser C.M."/>
            <person name="Hyman R.W."/>
        </authorList>
    </citation>
    <scope>NUCLEOTIDE SEQUENCE [LARGE SCALE GENOMIC DNA]</scope>
    <source>
        <strain>B-3501A</strain>
    </source>
</reference>
<proteinExistence type="inferred from homology"/>
<feature type="chain" id="PRO_0000410272" description="rRNA biogenesis protein RRP36">
    <location>
        <begin position="1"/>
        <end position="296"/>
    </location>
</feature>
<feature type="region of interest" description="Disordered" evidence="3">
    <location>
        <begin position="15"/>
        <end position="135"/>
    </location>
</feature>
<feature type="region of interest" description="Disordered" evidence="3">
    <location>
        <begin position="253"/>
        <end position="296"/>
    </location>
</feature>
<feature type="coiled-coil region" evidence="2">
    <location>
        <begin position="147"/>
        <end position="203"/>
    </location>
</feature>
<feature type="compositionally biased region" description="Low complexity" evidence="3">
    <location>
        <begin position="18"/>
        <end position="31"/>
    </location>
</feature>
<feature type="compositionally biased region" description="Basic residues" evidence="3">
    <location>
        <begin position="262"/>
        <end position="278"/>
    </location>
</feature>
<organism>
    <name type="scientific">Cryptococcus neoformans var. neoformans serotype D (strain B-3501A)</name>
    <name type="common">Filobasidiella neoformans</name>
    <dbReference type="NCBI Taxonomy" id="283643"/>
    <lineage>
        <taxon>Eukaryota</taxon>
        <taxon>Fungi</taxon>
        <taxon>Dikarya</taxon>
        <taxon>Basidiomycota</taxon>
        <taxon>Agaricomycotina</taxon>
        <taxon>Tremellomycetes</taxon>
        <taxon>Tremellales</taxon>
        <taxon>Cryptococcaceae</taxon>
        <taxon>Cryptococcus</taxon>
        <taxon>Cryptococcus neoformans species complex</taxon>
    </lineage>
</organism>
<comment type="function">
    <text evidence="1">Component of the 90S pre-ribosome involved in the maturation of rRNAs. Required for early cleavages of the pre-RNAs in the 40S ribosomal subunit maturation pathway (By similarity).</text>
</comment>
<comment type="subunit">
    <text evidence="1">Associates with 90S and pre-40S pre-ribosomal particles.</text>
</comment>
<comment type="subcellular location">
    <subcellularLocation>
        <location evidence="1">Nucleus</location>
        <location evidence="1">Nucleolus</location>
    </subcellularLocation>
</comment>
<comment type="similarity">
    <text evidence="4">Belongs to the RRP36 family.</text>
</comment>
<comment type="sequence caution" evidence="4">
    <conflict type="erroneous gene model prediction">
        <sequence resource="EMBL-CDS" id="EAL19556"/>
    </conflict>
</comment>
<keyword id="KW-0175">Coiled coil</keyword>
<keyword id="KW-0539">Nucleus</keyword>
<keyword id="KW-0687">Ribonucleoprotein</keyword>
<keyword id="KW-0690">Ribosome biogenesis</keyword>
<keyword id="KW-0698">rRNA processing</keyword>
<accession>P0CR21</accession>
<accession>Q55PM8</accession>
<accession>Q5KDS8</accession>
<name>RRP36_CRYNB</name>